<name>YIHI_VIBCM</name>
<keyword id="KW-0343">GTPase activation</keyword>
<keyword id="KW-0690">Ribosome biogenesis</keyword>
<accession>C3LPV6</accession>
<feature type="chain" id="PRO_1000149677" description="Der GTPase-activating protein YihI">
    <location>
        <begin position="1"/>
        <end position="182"/>
    </location>
</feature>
<feature type="region of interest" description="Disordered" evidence="2">
    <location>
        <begin position="1"/>
        <end position="79"/>
    </location>
</feature>
<feature type="region of interest" description="Disordered" evidence="2">
    <location>
        <begin position="143"/>
        <end position="182"/>
    </location>
</feature>
<feature type="compositionally biased region" description="Basic and acidic residues" evidence="2">
    <location>
        <begin position="23"/>
        <end position="32"/>
    </location>
</feature>
<feature type="compositionally biased region" description="Basic residues" evidence="2">
    <location>
        <begin position="33"/>
        <end position="47"/>
    </location>
</feature>
<proteinExistence type="inferred from homology"/>
<comment type="function">
    <text evidence="1">A GTPase-activating protein (GAP) that modifies Der/EngA GTPase function. May play a role in ribosome biogenesis.</text>
</comment>
<comment type="subunit">
    <text evidence="1">Interacts with Der.</text>
</comment>
<comment type="similarity">
    <text evidence="1">Belongs to the YihI family.</text>
</comment>
<organism>
    <name type="scientific">Vibrio cholerae serotype O1 (strain M66-2)</name>
    <dbReference type="NCBI Taxonomy" id="579112"/>
    <lineage>
        <taxon>Bacteria</taxon>
        <taxon>Pseudomonadati</taxon>
        <taxon>Pseudomonadota</taxon>
        <taxon>Gammaproteobacteria</taxon>
        <taxon>Vibrionales</taxon>
        <taxon>Vibrionaceae</taxon>
        <taxon>Vibrio</taxon>
    </lineage>
</organism>
<sequence>MSRSKKSRKPGTNSNDQLVVVRTRSESELESRLRKKLKKRKGLKSGSRHSEGSESQVRQAAQKRDPRLGSKKPIPLIVAEPKKLNKQERKLAAEQELAMLEKDAQLNVLLDRLDNGEKLGIGLQKYVDEKLDRIEVLMEQLGLLDDEPEPAPAPQSKPTKKRKTEDDLLSEFEQLDVDKYQD</sequence>
<protein>
    <recommendedName>
        <fullName evidence="1">Der GTPase-activating protein YihI</fullName>
    </recommendedName>
</protein>
<evidence type="ECO:0000255" key="1">
    <source>
        <dbReference type="HAMAP-Rule" id="MF_01058"/>
    </source>
</evidence>
<evidence type="ECO:0000256" key="2">
    <source>
        <dbReference type="SAM" id="MobiDB-lite"/>
    </source>
</evidence>
<reference key="1">
    <citation type="journal article" date="2008" name="PLoS ONE">
        <title>A recalibrated molecular clock and independent origins for the cholera pandemic clones.</title>
        <authorList>
            <person name="Feng L."/>
            <person name="Reeves P.R."/>
            <person name="Lan R."/>
            <person name="Ren Y."/>
            <person name="Gao C."/>
            <person name="Zhou Z."/>
            <person name="Ren Y."/>
            <person name="Cheng J."/>
            <person name="Wang W."/>
            <person name="Wang J."/>
            <person name="Qian W."/>
            <person name="Li D."/>
            <person name="Wang L."/>
        </authorList>
    </citation>
    <scope>NUCLEOTIDE SEQUENCE [LARGE SCALE GENOMIC DNA]</scope>
    <source>
        <strain>M66-2</strain>
    </source>
</reference>
<dbReference type="EMBL" id="CP001233">
    <property type="protein sequence ID" value="ACP04450.1"/>
    <property type="molecule type" value="Genomic_DNA"/>
</dbReference>
<dbReference type="RefSeq" id="WP_000091428.1">
    <property type="nucleotide sequence ID" value="NC_012578.1"/>
</dbReference>
<dbReference type="SMR" id="C3LPV6"/>
<dbReference type="GeneID" id="69718602"/>
<dbReference type="KEGG" id="vcm:VCM66_0114"/>
<dbReference type="HOGENOM" id="CLU_094104_1_0_6"/>
<dbReference type="Proteomes" id="UP000001217">
    <property type="component" value="Chromosome I"/>
</dbReference>
<dbReference type="GO" id="GO:0005096">
    <property type="term" value="F:GTPase activator activity"/>
    <property type="evidence" value="ECO:0007669"/>
    <property type="project" value="UniProtKB-KW"/>
</dbReference>
<dbReference type="GO" id="GO:0042254">
    <property type="term" value="P:ribosome biogenesis"/>
    <property type="evidence" value="ECO:0007669"/>
    <property type="project" value="UniProtKB-KW"/>
</dbReference>
<dbReference type="HAMAP" id="MF_01058">
    <property type="entry name" value="GAP_YihI"/>
    <property type="match status" value="1"/>
</dbReference>
<dbReference type="InterPro" id="IPR007336">
    <property type="entry name" value="YihI"/>
</dbReference>
<dbReference type="NCBIfam" id="NF003560">
    <property type="entry name" value="PRK05244.1-1"/>
    <property type="match status" value="1"/>
</dbReference>
<dbReference type="Pfam" id="PF04220">
    <property type="entry name" value="YihI"/>
    <property type="match status" value="1"/>
</dbReference>
<gene>
    <name evidence="1" type="primary">yihI</name>
    <name type="ordered locus">VCM66_0114</name>
</gene>